<proteinExistence type="evidence at protein level"/>
<dbReference type="PIR" id="F93256">
    <property type="entry name" value="AVMS13"/>
</dbReference>
<dbReference type="SMR" id="P01793"/>
<dbReference type="FunCoup" id="P01793">
    <property type="interactions" value="543"/>
</dbReference>
<dbReference type="InParanoid" id="P01793"/>
<dbReference type="Proteomes" id="UP000000589">
    <property type="component" value="Unplaced"/>
</dbReference>
<dbReference type="RNAct" id="P01793">
    <property type="molecule type" value="protein"/>
</dbReference>
<dbReference type="GO" id="GO:0005576">
    <property type="term" value="C:extracellular region"/>
    <property type="evidence" value="ECO:0007669"/>
    <property type="project" value="UniProtKB-ARBA"/>
</dbReference>
<dbReference type="GO" id="GO:0019814">
    <property type="term" value="C:immunoglobulin complex"/>
    <property type="evidence" value="ECO:0007669"/>
    <property type="project" value="UniProtKB-KW"/>
</dbReference>
<dbReference type="GO" id="GO:0003823">
    <property type="term" value="F:antigen binding"/>
    <property type="evidence" value="ECO:0000318"/>
    <property type="project" value="GO_Central"/>
</dbReference>
<dbReference type="GO" id="GO:0016064">
    <property type="term" value="P:immunoglobulin mediated immune response"/>
    <property type="evidence" value="ECO:0000318"/>
    <property type="project" value="GO_Central"/>
</dbReference>
<dbReference type="FunFam" id="2.60.40.10:FF:001372">
    <property type="entry name" value="Ig heavy chain V region M603"/>
    <property type="match status" value="1"/>
</dbReference>
<dbReference type="Gene3D" id="2.60.40.10">
    <property type="entry name" value="Immunoglobulins"/>
    <property type="match status" value="1"/>
</dbReference>
<dbReference type="InterPro" id="IPR007110">
    <property type="entry name" value="Ig-like_dom"/>
</dbReference>
<dbReference type="InterPro" id="IPR036179">
    <property type="entry name" value="Ig-like_dom_sf"/>
</dbReference>
<dbReference type="InterPro" id="IPR013783">
    <property type="entry name" value="Ig-like_fold"/>
</dbReference>
<dbReference type="InterPro" id="IPR003599">
    <property type="entry name" value="Ig_sub"/>
</dbReference>
<dbReference type="InterPro" id="IPR013106">
    <property type="entry name" value="Ig_V-set"/>
</dbReference>
<dbReference type="InterPro" id="IPR050199">
    <property type="entry name" value="IgHV"/>
</dbReference>
<dbReference type="PANTHER" id="PTHR23266">
    <property type="entry name" value="IMMUNOGLOBULIN HEAVY CHAIN"/>
    <property type="match status" value="1"/>
</dbReference>
<dbReference type="Pfam" id="PF07686">
    <property type="entry name" value="V-set"/>
    <property type="match status" value="1"/>
</dbReference>
<dbReference type="SMART" id="SM00409">
    <property type="entry name" value="IG"/>
    <property type="match status" value="1"/>
</dbReference>
<dbReference type="SMART" id="SM00406">
    <property type="entry name" value="IGv"/>
    <property type="match status" value="1"/>
</dbReference>
<dbReference type="SUPFAM" id="SSF48726">
    <property type="entry name" value="Immunoglobulin"/>
    <property type="match status" value="1"/>
</dbReference>
<dbReference type="PROSITE" id="PS50835">
    <property type="entry name" value="IG_LIKE"/>
    <property type="match status" value="1"/>
</dbReference>
<keyword id="KW-1064">Adaptive immunity</keyword>
<keyword id="KW-0903">Direct protein sequencing</keyword>
<keyword id="KW-0374">Hybridoma</keyword>
<keyword id="KW-0391">Immunity</keyword>
<keyword id="KW-1280">Immunoglobulin</keyword>
<keyword id="KW-1185">Reference proteome</keyword>
<sequence length="123" mass="13808">EVKLVESGGGLVQPGGSLRLSCATSGFTLSDFYMEWVRQTPGKRLEWIAASRNKVYDYTTEYSASVKGRFIVSRDTSQSILYLQMNALRAEDTAIYYCARDAYYGSYWYFDVWGAGTTVTVSS</sequence>
<reference key="1">
    <citation type="journal article" date="1981" name="Nature">
        <title>IgG antibodies to phosphorylcholine exhibit more diversity than their IgM counterparts.</title>
        <authorList>
            <person name="Gearhart P.J."/>
            <person name="Johnson N.D."/>
            <person name="Douglas R."/>
            <person name="Hood L."/>
        </authorList>
    </citation>
    <scope>PROTEIN SEQUENCE</scope>
</reference>
<protein>
    <recommendedName>
        <fullName>Ig heavy chain V region HPCG13</fullName>
    </recommendedName>
</protein>
<organism>
    <name type="scientific">Mus musculus</name>
    <name type="common">Mouse</name>
    <dbReference type="NCBI Taxonomy" id="10090"/>
    <lineage>
        <taxon>Eukaryota</taxon>
        <taxon>Metazoa</taxon>
        <taxon>Chordata</taxon>
        <taxon>Craniata</taxon>
        <taxon>Vertebrata</taxon>
        <taxon>Euteleostomi</taxon>
        <taxon>Mammalia</taxon>
        <taxon>Eutheria</taxon>
        <taxon>Euarchontoglires</taxon>
        <taxon>Glires</taxon>
        <taxon>Rodentia</taxon>
        <taxon>Myomorpha</taxon>
        <taxon>Muroidea</taxon>
        <taxon>Muridae</taxon>
        <taxon>Murinae</taxon>
        <taxon>Mus</taxon>
        <taxon>Mus</taxon>
    </lineage>
</organism>
<comment type="miscellaneous">
    <text>This chain was isolated from a myeloma protein that binds phosphorylcholine.</text>
</comment>
<accession>P01793</accession>
<feature type="chain" id="PRO_0000059879" description="Ig heavy chain V region HPCG13">
    <location>
        <begin position="1"/>
        <end position="123" status="greater than"/>
    </location>
</feature>
<feature type="domain" description="Ig-like">
    <location>
        <begin position="1"/>
        <end position="114"/>
    </location>
</feature>
<feature type="non-terminal residue">
    <location>
        <position position="123"/>
    </location>
</feature>
<name>HVM24_MOUSE</name>